<proteinExistence type="inferred from homology"/>
<protein>
    <recommendedName>
        <fullName>Large envelope protein</fullName>
    </recommendedName>
    <alternativeName>
        <fullName>L glycoprotein</fullName>
    </alternativeName>
    <alternativeName>
        <fullName>L-HBsAg</fullName>
        <shortName>LHB</shortName>
    </alternativeName>
    <alternativeName>
        <fullName>Large S protein</fullName>
    </alternativeName>
    <alternativeName>
        <fullName>Large surface protein</fullName>
    </alternativeName>
    <alternativeName>
        <fullName>Major surface antigen</fullName>
    </alternativeName>
    <component>
        <recommendedName>
            <fullName>Truncated S protein</fullName>
            <shortName>St</shortName>
        </recommendedName>
    </component>
</protein>
<sequence>MGQQPAKSMDVRRIEGGELLLNQLAGRMIPKGTVTWSGKFPTIDHLLDHVQTMEEVNTLQQQGAWPAGAGRRLGLTNPTPHETPQPQWTPEEDQKAREAFRRYQEERPPETTTIAPTSPTPWKLQPGDDPLLENKSLLETHPLYQNPEPAVPVIKTPPLKKKKMPGTFGGILAGLIGLLVSFFLLIKILEILRRLDWWWISLSSPKGKMQCAFQDTGAQISQHYVGSCPWGCPGFLWTYLRLFIIFLLILLVAAGLLYLTDNMSIILEKLQWESVSVLFSSISSLLPSDQKSLVALMFGLLLIWMTSSSATQTLVTLTQLATLSVLFYKN</sequence>
<reference key="1">
    <citation type="submission" date="1991-06" db="EMBL/GenBank/DDBJ databases">
        <title>Complete nucleotide sequence of a chinese Hepatitis B virus.</title>
        <authorList>
            <person name="Tong S."/>
            <person name="Mattes F."/>
            <person name="Blum H.E."/>
            <person name="Fernholz D."/>
            <person name="Schneider R."/>
            <person name="Will H."/>
        </authorList>
    </citation>
    <scope>NUCLEOTIDE SEQUENCE [GENOMIC DNA]</scope>
    <scope>ISOFORM S</scope>
</reference>
<comment type="function">
    <text evidence="1">The large envelope protein exists in two topological conformations, one which is termed 'external' or Le-HBsAg and the other 'internal' or Li-HBsAg. In its external conformation the protein attaches the virus to cell receptors and thereby initiating infection. This interaction determines the species specificity and liver tropism. The large envelope protein probably also assumes fusion between virion and host membranes. In its internal conformation the protein plays a role in virion morphogenesis and mediates the contact with the nucleocapsid like a matrix protein (By similarity).</text>
</comment>
<comment type="function">
    <text evidence="1">Truncated S protein may be involved in translocation of pre-S domain through the virion membrane.</text>
</comment>
<comment type="subunit">
    <text evidence="1">Large internal envelope protein interacts with capsid protein.</text>
</comment>
<comment type="subcellular location">
    <subcellularLocation>
        <location>Virion membrane</location>
    </subcellularLocation>
</comment>
<comment type="alternative products">
    <event type="alternative initiation"/>
    <isoform>
        <id>Q66405-1</id>
        <name>L</name>
        <name>Large envelope protein</name>
        <name>LHB</name>
        <name>L-HBsAg</name>
        <sequence type="displayed"/>
    </isoform>
    <isoform>
        <id>Q66405-2</id>
        <name>S</name>
        <name>Small envelope protein</name>
        <name>SHB</name>
        <name>S-HBsAg</name>
        <sequence type="described" ref="VSP_039691"/>
    </isoform>
</comment>
<comment type="domain">
    <text>The large envelope protein is synthesized with the pre-S region at the cytosolic side of the endoplasmic reticulum and, hence will be within the virion after budding. Therefore the pre-S region is not N-glycosylated. Later a post-translational translocation of N-terminal pre-S and TM1 domains occur in about 50% of proteins at the virion surface. These molecules change their topology by an unknown mechanism, resulting in exposure of pre-S region at virion surface.</text>
</comment>
<comment type="PTM">
    <text>Myristoylation contributes importantly to DHBV infectivity. It is most likely required for an early step of the life cycle involving the entry or uncoating of virus particles.</text>
</comment>
<comment type="PTM">
    <text>Phosphorylated on pre-S domain for about 50% of L proteins, the L chains with internal pre-S region (Li-HBsAg).</text>
</comment>
<comment type="similarity">
    <text evidence="4">Belongs to the avihepadnavirus major surface antigen family.</text>
</comment>
<evidence type="ECO:0000250" key="1"/>
<evidence type="ECO:0000255" key="2"/>
<evidence type="ECO:0000256" key="3">
    <source>
        <dbReference type="SAM" id="MobiDB-lite"/>
    </source>
</evidence>
<evidence type="ECO:0000305" key="4"/>
<keyword id="KW-0024">Alternative initiation</keyword>
<keyword id="KW-1168">Fusion of virus membrane with host membrane</keyword>
<keyword id="KW-0325">Glycoprotein</keyword>
<keyword id="KW-0945">Host-virus interaction</keyword>
<keyword id="KW-0449">Lipoprotein</keyword>
<keyword id="KW-0472">Membrane</keyword>
<keyword id="KW-0519">Myristate</keyword>
<keyword id="KW-0597">Phosphoprotein</keyword>
<keyword id="KW-1185">Reference proteome</keyword>
<keyword id="KW-0812">Transmembrane</keyword>
<keyword id="KW-1133">Transmembrane helix</keyword>
<keyword id="KW-1161">Viral attachment to host cell</keyword>
<keyword id="KW-0261">Viral envelope protein</keyword>
<keyword id="KW-1162">Viral penetration into host cytoplasm</keyword>
<keyword id="KW-0946">Virion</keyword>
<keyword id="KW-1160">Virus entry into host cell</keyword>
<accession>Q66405</accession>
<accession>Q66404</accession>
<accession>Q89748</accession>
<name>HBSAG_DHBVQ</name>
<dbReference type="EMBL" id="X60213">
    <property type="protein sequence ID" value="CAA42770.1"/>
    <property type="status" value="ALT_SEQ"/>
    <property type="molecule type" value="Genomic_DNA"/>
</dbReference>
<dbReference type="EMBL" id="X60213">
    <property type="protein sequence ID" value="CAA42771.1"/>
    <property type="molecule type" value="Genomic_DNA"/>
</dbReference>
<dbReference type="EMBL" id="X60213">
    <property type="protein sequence ID" value="CAA42772.1"/>
    <property type="status" value="ALT_SEQ"/>
    <property type="molecule type" value="Genomic_DNA"/>
</dbReference>
<dbReference type="RefSeq" id="NP_039823.1">
    <property type="nucleotide sequence ID" value="NC_001344.1"/>
</dbReference>
<dbReference type="RefSeq" id="NP_039824.1">
    <property type="nucleotide sequence ID" value="NC_001344.1"/>
</dbReference>
<dbReference type="RefSeq" id="NP_039826.1">
    <property type="nucleotide sequence ID" value="NC_001344.1"/>
</dbReference>
<dbReference type="SMR" id="Q66405"/>
<dbReference type="GlyCosmos" id="Q66405">
    <property type="glycosylation" value="1 site, No reported glycans"/>
</dbReference>
<dbReference type="KEGG" id="vg:2546411"/>
<dbReference type="KEGG" id="vg:2546412"/>
<dbReference type="KEGG" id="vg:2546415"/>
<dbReference type="Proteomes" id="UP000009098">
    <property type="component" value="Segment"/>
</dbReference>
<dbReference type="GO" id="GO:0016020">
    <property type="term" value="C:membrane"/>
    <property type="evidence" value="ECO:0007669"/>
    <property type="project" value="UniProtKB-KW"/>
</dbReference>
<dbReference type="GO" id="GO:0019031">
    <property type="term" value="C:viral envelope"/>
    <property type="evidence" value="ECO:0007669"/>
    <property type="project" value="UniProtKB-KW"/>
</dbReference>
<dbReference type="GO" id="GO:0055036">
    <property type="term" value="C:virion membrane"/>
    <property type="evidence" value="ECO:0007669"/>
    <property type="project" value="UniProtKB-SubCell"/>
</dbReference>
<dbReference type="GO" id="GO:0039663">
    <property type="term" value="P:membrane fusion involved in viral entry into host cell"/>
    <property type="evidence" value="ECO:0007669"/>
    <property type="project" value="UniProtKB-KW"/>
</dbReference>
<dbReference type="GO" id="GO:0046718">
    <property type="term" value="P:symbiont entry into host cell"/>
    <property type="evidence" value="ECO:0007669"/>
    <property type="project" value="UniProtKB-KW"/>
</dbReference>
<dbReference type="GO" id="GO:0019062">
    <property type="term" value="P:virion attachment to host cell"/>
    <property type="evidence" value="ECO:0007669"/>
    <property type="project" value="UniProtKB-KW"/>
</dbReference>
<dbReference type="InterPro" id="IPR000349">
    <property type="entry name" value="HBV_HBSAG"/>
</dbReference>
<dbReference type="Pfam" id="PF00695">
    <property type="entry name" value="vMSA"/>
    <property type="match status" value="2"/>
</dbReference>
<feature type="initiator methionine" description="Removed; by host" evidence="1">
    <location>
        <position position="1"/>
    </location>
</feature>
<feature type="chain" id="PRO_0000397681" description="Large envelope protein">
    <location>
        <begin position="2"/>
        <end position="330"/>
    </location>
</feature>
<feature type="chain" id="PRO_0000397682" description="Truncated S protein">
    <location>
        <begin position="164"/>
        <end position="240" status="uncertain"/>
    </location>
</feature>
<feature type="topological domain" description="Cytoplasmic; in internal conformation" evidence="2">
    <location>
        <begin position="2"/>
        <end position="238"/>
    </location>
</feature>
<feature type="topological domain" description="Extracellular; in external conformation" evidence="2">
    <location>
        <begin position="2"/>
        <end position="165"/>
    </location>
</feature>
<feature type="transmembrane region" description="Helical" evidence="2">
    <location>
        <begin position="166"/>
        <end position="186"/>
    </location>
</feature>
<feature type="topological domain" description="Cytoplasmic; in external conformation" evidence="2">
    <location>
        <begin position="187"/>
        <end position="238"/>
    </location>
</feature>
<feature type="transmembrane region" description="Helical" evidence="2">
    <location>
        <begin position="239"/>
        <end position="259"/>
    </location>
</feature>
<feature type="topological domain" description="Extracellular" evidence="2">
    <location>
        <begin position="260"/>
        <end position="292"/>
    </location>
</feature>
<feature type="transmembrane region" description="Helical" evidence="2">
    <location>
        <begin position="293"/>
        <end position="313"/>
    </location>
</feature>
<feature type="topological domain" description="Cytoplasmic" evidence="2">
    <location>
        <begin position="314"/>
        <end position="330"/>
    </location>
</feature>
<feature type="region of interest" description="Pre-S" evidence="1">
    <location>
        <begin position="2"/>
        <end position="163"/>
    </location>
</feature>
<feature type="region of interest" description="Disordered" evidence="3">
    <location>
        <begin position="68"/>
        <end position="125"/>
    </location>
</feature>
<feature type="region of interest" description="TM1" evidence="1">
    <location>
        <begin position="166"/>
        <end position="186"/>
    </location>
</feature>
<feature type="region of interest" description="TM2" evidence="1">
    <location>
        <begin position="239"/>
        <end position="259"/>
    </location>
</feature>
<feature type="region of interest" description="TM3" evidence="1">
    <location>
        <begin position="293"/>
        <end position="313"/>
    </location>
</feature>
<feature type="compositionally biased region" description="Polar residues" evidence="3">
    <location>
        <begin position="76"/>
        <end position="88"/>
    </location>
</feature>
<feature type="compositionally biased region" description="Basic and acidic residues" evidence="3">
    <location>
        <begin position="92"/>
        <end position="109"/>
    </location>
</feature>
<feature type="site" description="Cleavage; by host" evidence="2">
    <location>
        <begin position="240" status="uncertain"/>
        <end position="241" status="uncertain"/>
    </location>
</feature>
<feature type="lipid moiety-binding region" description="N-myristoyl glycine; by host" evidence="1">
    <location>
        <position position="2"/>
    </location>
</feature>
<feature type="glycosylation site" description="N-linked (GlcNAc...) asparagine; by host" evidence="2">
    <location>
        <position position="262"/>
    </location>
</feature>
<feature type="splice variant" id="VSP_039691" description="In isoform S." evidence="4">
    <location>
        <begin position="1"/>
        <end position="163"/>
    </location>
</feature>
<organismHost>
    <name type="scientific">Anas</name>
    <name type="common">ducks</name>
    <dbReference type="NCBI Taxonomy" id="8835"/>
</organismHost>
<gene>
    <name type="primary">S</name>
</gene>
<organism>
    <name type="scientific">Duck hepatitis B virus (isolate Shanghai/DHBVQCA34)</name>
    <name type="common">DHBV</name>
    <dbReference type="NCBI Taxonomy" id="644639"/>
    <lineage>
        <taxon>Viruses</taxon>
        <taxon>Riboviria</taxon>
        <taxon>Pararnavirae</taxon>
        <taxon>Artverviricota</taxon>
        <taxon>Revtraviricetes</taxon>
        <taxon>Blubervirales</taxon>
        <taxon>Hepadnaviridae</taxon>
        <taxon>Avihepadnavirus</taxon>
        <taxon>Duck hepatitis B virus</taxon>
    </lineage>
</organism>